<dbReference type="EMBL" id="CP000414">
    <property type="protein sequence ID" value="ABJ61320.1"/>
    <property type="molecule type" value="Genomic_DNA"/>
</dbReference>
<dbReference type="RefSeq" id="WP_011679127.1">
    <property type="nucleotide sequence ID" value="NC_008531.1"/>
</dbReference>
<dbReference type="SMR" id="Q03ZQ2"/>
<dbReference type="EnsemblBacteria" id="ABJ61320">
    <property type="protein sequence ID" value="ABJ61320"/>
    <property type="gene ID" value="LEUM_0189"/>
</dbReference>
<dbReference type="GeneID" id="29577288"/>
<dbReference type="KEGG" id="lme:LEUM_0189"/>
<dbReference type="eggNOG" id="COG0480">
    <property type="taxonomic scope" value="Bacteria"/>
</dbReference>
<dbReference type="HOGENOM" id="CLU_002794_4_1_9"/>
<dbReference type="Proteomes" id="UP000000362">
    <property type="component" value="Chromosome"/>
</dbReference>
<dbReference type="GO" id="GO:0005737">
    <property type="term" value="C:cytoplasm"/>
    <property type="evidence" value="ECO:0007669"/>
    <property type="project" value="UniProtKB-SubCell"/>
</dbReference>
<dbReference type="GO" id="GO:0005525">
    <property type="term" value="F:GTP binding"/>
    <property type="evidence" value="ECO:0007669"/>
    <property type="project" value="UniProtKB-UniRule"/>
</dbReference>
<dbReference type="GO" id="GO:0003924">
    <property type="term" value="F:GTPase activity"/>
    <property type="evidence" value="ECO:0007669"/>
    <property type="project" value="InterPro"/>
</dbReference>
<dbReference type="GO" id="GO:0003746">
    <property type="term" value="F:translation elongation factor activity"/>
    <property type="evidence" value="ECO:0007669"/>
    <property type="project" value="UniProtKB-UniRule"/>
</dbReference>
<dbReference type="GO" id="GO:0032790">
    <property type="term" value="P:ribosome disassembly"/>
    <property type="evidence" value="ECO:0007669"/>
    <property type="project" value="TreeGrafter"/>
</dbReference>
<dbReference type="CDD" id="cd01886">
    <property type="entry name" value="EF-G"/>
    <property type="match status" value="1"/>
</dbReference>
<dbReference type="CDD" id="cd16262">
    <property type="entry name" value="EFG_III"/>
    <property type="match status" value="1"/>
</dbReference>
<dbReference type="CDD" id="cd01434">
    <property type="entry name" value="EFG_mtEFG1_IV"/>
    <property type="match status" value="1"/>
</dbReference>
<dbReference type="CDD" id="cd03713">
    <property type="entry name" value="EFG_mtEFG_C"/>
    <property type="match status" value="1"/>
</dbReference>
<dbReference type="CDD" id="cd04088">
    <property type="entry name" value="EFG_mtEFG_II"/>
    <property type="match status" value="1"/>
</dbReference>
<dbReference type="FunFam" id="2.40.30.10:FF:000006">
    <property type="entry name" value="Elongation factor G"/>
    <property type="match status" value="1"/>
</dbReference>
<dbReference type="FunFam" id="3.30.230.10:FF:000003">
    <property type="entry name" value="Elongation factor G"/>
    <property type="match status" value="1"/>
</dbReference>
<dbReference type="FunFam" id="3.30.70.240:FF:000001">
    <property type="entry name" value="Elongation factor G"/>
    <property type="match status" value="1"/>
</dbReference>
<dbReference type="FunFam" id="3.30.70.870:FF:000001">
    <property type="entry name" value="Elongation factor G"/>
    <property type="match status" value="1"/>
</dbReference>
<dbReference type="FunFam" id="3.40.50.300:FF:000029">
    <property type="entry name" value="Elongation factor G"/>
    <property type="match status" value="1"/>
</dbReference>
<dbReference type="Gene3D" id="3.30.230.10">
    <property type="match status" value="1"/>
</dbReference>
<dbReference type="Gene3D" id="3.30.70.240">
    <property type="match status" value="1"/>
</dbReference>
<dbReference type="Gene3D" id="3.30.70.870">
    <property type="entry name" value="Elongation Factor G (Translational Gtpase), domain 3"/>
    <property type="match status" value="1"/>
</dbReference>
<dbReference type="Gene3D" id="3.40.50.300">
    <property type="entry name" value="P-loop containing nucleotide triphosphate hydrolases"/>
    <property type="match status" value="1"/>
</dbReference>
<dbReference type="Gene3D" id="2.40.30.10">
    <property type="entry name" value="Translation factors"/>
    <property type="match status" value="1"/>
</dbReference>
<dbReference type="HAMAP" id="MF_00054_B">
    <property type="entry name" value="EF_G_EF_2_B"/>
    <property type="match status" value="1"/>
</dbReference>
<dbReference type="InterPro" id="IPR053905">
    <property type="entry name" value="EF-G-like_DII"/>
</dbReference>
<dbReference type="InterPro" id="IPR041095">
    <property type="entry name" value="EFG_II"/>
</dbReference>
<dbReference type="InterPro" id="IPR009022">
    <property type="entry name" value="EFG_III"/>
</dbReference>
<dbReference type="InterPro" id="IPR035647">
    <property type="entry name" value="EFG_III/V"/>
</dbReference>
<dbReference type="InterPro" id="IPR047872">
    <property type="entry name" value="EFG_IV"/>
</dbReference>
<dbReference type="InterPro" id="IPR035649">
    <property type="entry name" value="EFG_V"/>
</dbReference>
<dbReference type="InterPro" id="IPR000640">
    <property type="entry name" value="EFG_V-like"/>
</dbReference>
<dbReference type="InterPro" id="IPR031157">
    <property type="entry name" value="G_TR_CS"/>
</dbReference>
<dbReference type="InterPro" id="IPR027417">
    <property type="entry name" value="P-loop_NTPase"/>
</dbReference>
<dbReference type="InterPro" id="IPR020568">
    <property type="entry name" value="Ribosomal_Su5_D2-typ_SF"/>
</dbReference>
<dbReference type="InterPro" id="IPR014721">
    <property type="entry name" value="Ribsml_uS5_D2-typ_fold_subgr"/>
</dbReference>
<dbReference type="InterPro" id="IPR005225">
    <property type="entry name" value="Small_GTP-bd"/>
</dbReference>
<dbReference type="InterPro" id="IPR000795">
    <property type="entry name" value="T_Tr_GTP-bd_dom"/>
</dbReference>
<dbReference type="InterPro" id="IPR009000">
    <property type="entry name" value="Transl_B-barrel_sf"/>
</dbReference>
<dbReference type="InterPro" id="IPR004540">
    <property type="entry name" value="Transl_elong_EFG/EF2"/>
</dbReference>
<dbReference type="InterPro" id="IPR005517">
    <property type="entry name" value="Transl_elong_EFG/EF2_IV"/>
</dbReference>
<dbReference type="NCBIfam" id="TIGR00484">
    <property type="entry name" value="EF-G"/>
    <property type="match status" value="1"/>
</dbReference>
<dbReference type="NCBIfam" id="NF009379">
    <property type="entry name" value="PRK12740.1-3"/>
    <property type="match status" value="1"/>
</dbReference>
<dbReference type="NCBIfam" id="NF009381">
    <property type="entry name" value="PRK12740.1-5"/>
    <property type="match status" value="1"/>
</dbReference>
<dbReference type="NCBIfam" id="TIGR00231">
    <property type="entry name" value="small_GTP"/>
    <property type="match status" value="1"/>
</dbReference>
<dbReference type="PANTHER" id="PTHR43261:SF1">
    <property type="entry name" value="RIBOSOME-RELEASING FACTOR 2, MITOCHONDRIAL"/>
    <property type="match status" value="1"/>
</dbReference>
<dbReference type="PANTHER" id="PTHR43261">
    <property type="entry name" value="TRANSLATION ELONGATION FACTOR G-RELATED"/>
    <property type="match status" value="1"/>
</dbReference>
<dbReference type="Pfam" id="PF22042">
    <property type="entry name" value="EF-G_D2"/>
    <property type="match status" value="1"/>
</dbReference>
<dbReference type="Pfam" id="PF00679">
    <property type="entry name" value="EFG_C"/>
    <property type="match status" value="1"/>
</dbReference>
<dbReference type="Pfam" id="PF14492">
    <property type="entry name" value="EFG_III"/>
    <property type="match status" value="1"/>
</dbReference>
<dbReference type="Pfam" id="PF03764">
    <property type="entry name" value="EFG_IV"/>
    <property type="match status" value="1"/>
</dbReference>
<dbReference type="Pfam" id="PF00009">
    <property type="entry name" value="GTP_EFTU"/>
    <property type="match status" value="1"/>
</dbReference>
<dbReference type="PRINTS" id="PR00315">
    <property type="entry name" value="ELONGATNFCT"/>
</dbReference>
<dbReference type="SMART" id="SM00838">
    <property type="entry name" value="EFG_C"/>
    <property type="match status" value="1"/>
</dbReference>
<dbReference type="SMART" id="SM00889">
    <property type="entry name" value="EFG_IV"/>
    <property type="match status" value="1"/>
</dbReference>
<dbReference type="SUPFAM" id="SSF54980">
    <property type="entry name" value="EF-G C-terminal domain-like"/>
    <property type="match status" value="2"/>
</dbReference>
<dbReference type="SUPFAM" id="SSF52540">
    <property type="entry name" value="P-loop containing nucleoside triphosphate hydrolases"/>
    <property type="match status" value="1"/>
</dbReference>
<dbReference type="SUPFAM" id="SSF54211">
    <property type="entry name" value="Ribosomal protein S5 domain 2-like"/>
    <property type="match status" value="1"/>
</dbReference>
<dbReference type="SUPFAM" id="SSF50447">
    <property type="entry name" value="Translation proteins"/>
    <property type="match status" value="1"/>
</dbReference>
<dbReference type="PROSITE" id="PS00301">
    <property type="entry name" value="G_TR_1"/>
    <property type="match status" value="1"/>
</dbReference>
<dbReference type="PROSITE" id="PS51722">
    <property type="entry name" value="G_TR_2"/>
    <property type="match status" value="1"/>
</dbReference>
<sequence length="703" mass="77570">MAKREYPLERTRNIGIMAHIDAGKTTTTERILYYTGKIHKIGETHDGASQMDFMEQEKERGITIQSAATTAVWHGFFDQFAKTPYRVNIIDTPGHVDFTIEVERALRVLDGAVAVLDGAAGVEPQTETVWRQATTYDVPRIVFVNKMDKLGADFQMSVDSIHERLQVNAEAIQWPIGAEDDFEAVIDLITQEAYYPEDDLGEKWAPREIPEELKELAEEKRNTLIEAVADVDDDLMEKYLEGEDISIEELKAAIRRATLALQFYPVLAGSAYKDKGVQMMLDAVVDYLPGPLDVKPYIANDPKTDEEIDLIADDSKPFAALAFKIMTDPFVGRLTFMRVYTGTLKSGSYVQNTSSDTRERVGRLLQMHATSRTEIEEVFSGDIAAAIGLKNTTTGDSLTDVSHQLILESMEFPEPVIELAIEPKTKADQDKLSNAIQKLAEEDPSFRATTNQETGQTLIAGMGELQLDIMVDRMRREFNVEATVGAPQVAYREAFTKTVQARGFFKRQSGGKGQYGDVYIEFAPNEEGAGFEFEDAIVGGVVPREYIPSVEAGLKDALNAGPLAGFPLVDLKAKLYDGSYHDVDSSEAAFKIAASLALKEAAKTAGAVILEPIMAVDIVAPEDNLGDVMGHVSARRGMIEGQESRGPVLAVKAKVPLSEMFGYATTLRSATQGRGTFQMVFDHYEAVPKNIQEEIIKTNGQED</sequence>
<organism>
    <name type="scientific">Leuconostoc mesenteroides subsp. mesenteroides (strain ATCC 8293 / DSM 20343 / BCRC 11652 / CCM 1803 / JCM 6124 / NCDO 523 / NBRC 100496 / NCIMB 8023 / NCTC 12954 / NRRL B-1118 / 37Y)</name>
    <dbReference type="NCBI Taxonomy" id="203120"/>
    <lineage>
        <taxon>Bacteria</taxon>
        <taxon>Bacillati</taxon>
        <taxon>Bacillota</taxon>
        <taxon>Bacilli</taxon>
        <taxon>Lactobacillales</taxon>
        <taxon>Lactobacillaceae</taxon>
        <taxon>Leuconostoc</taxon>
    </lineage>
</organism>
<proteinExistence type="inferred from homology"/>
<comment type="function">
    <text evidence="1">Catalyzes the GTP-dependent ribosomal translocation step during translation elongation. During this step, the ribosome changes from the pre-translocational (PRE) to the post-translocational (POST) state as the newly formed A-site-bound peptidyl-tRNA and P-site-bound deacylated tRNA move to the P and E sites, respectively. Catalyzes the coordinated movement of the two tRNA molecules, the mRNA and conformational changes in the ribosome.</text>
</comment>
<comment type="subcellular location">
    <subcellularLocation>
        <location evidence="1">Cytoplasm</location>
    </subcellularLocation>
</comment>
<comment type="similarity">
    <text evidence="1">Belongs to the TRAFAC class translation factor GTPase superfamily. Classic translation factor GTPase family. EF-G/EF-2 subfamily.</text>
</comment>
<reference key="1">
    <citation type="journal article" date="2006" name="Proc. Natl. Acad. Sci. U.S.A.">
        <title>Comparative genomics of the lactic acid bacteria.</title>
        <authorList>
            <person name="Makarova K.S."/>
            <person name="Slesarev A."/>
            <person name="Wolf Y.I."/>
            <person name="Sorokin A."/>
            <person name="Mirkin B."/>
            <person name="Koonin E.V."/>
            <person name="Pavlov A."/>
            <person name="Pavlova N."/>
            <person name="Karamychev V."/>
            <person name="Polouchine N."/>
            <person name="Shakhova V."/>
            <person name="Grigoriev I."/>
            <person name="Lou Y."/>
            <person name="Rohksar D."/>
            <person name="Lucas S."/>
            <person name="Huang K."/>
            <person name="Goodstein D.M."/>
            <person name="Hawkins T."/>
            <person name="Plengvidhya V."/>
            <person name="Welker D."/>
            <person name="Hughes J."/>
            <person name="Goh Y."/>
            <person name="Benson A."/>
            <person name="Baldwin K."/>
            <person name="Lee J.-H."/>
            <person name="Diaz-Muniz I."/>
            <person name="Dosti B."/>
            <person name="Smeianov V."/>
            <person name="Wechter W."/>
            <person name="Barabote R."/>
            <person name="Lorca G."/>
            <person name="Altermann E."/>
            <person name="Barrangou R."/>
            <person name="Ganesan B."/>
            <person name="Xie Y."/>
            <person name="Rawsthorne H."/>
            <person name="Tamir D."/>
            <person name="Parker C."/>
            <person name="Breidt F."/>
            <person name="Broadbent J.R."/>
            <person name="Hutkins R."/>
            <person name="O'Sullivan D."/>
            <person name="Steele J."/>
            <person name="Unlu G."/>
            <person name="Saier M.H. Jr."/>
            <person name="Klaenhammer T."/>
            <person name="Richardson P."/>
            <person name="Kozyavkin S."/>
            <person name="Weimer B.C."/>
            <person name="Mills D.A."/>
        </authorList>
    </citation>
    <scope>NUCLEOTIDE SEQUENCE [LARGE SCALE GENOMIC DNA]</scope>
    <source>
        <strain>ATCC 8293 / DSM 20343 / BCRC 11652 / CCM 1803 / JCM 6124 / NCDO 523 / NBRC 100496 / NCIMB 8023 / NCTC 12954 / NRRL B-1118 / 37Y</strain>
    </source>
</reference>
<feature type="chain" id="PRO_0000335847" description="Elongation factor G">
    <location>
        <begin position="1"/>
        <end position="703"/>
    </location>
</feature>
<feature type="domain" description="tr-type G">
    <location>
        <begin position="9"/>
        <end position="292"/>
    </location>
</feature>
<feature type="binding site" evidence="1">
    <location>
        <begin position="18"/>
        <end position="25"/>
    </location>
    <ligand>
        <name>GTP</name>
        <dbReference type="ChEBI" id="CHEBI:37565"/>
    </ligand>
</feature>
<feature type="binding site" evidence="1">
    <location>
        <begin position="91"/>
        <end position="95"/>
    </location>
    <ligand>
        <name>GTP</name>
        <dbReference type="ChEBI" id="CHEBI:37565"/>
    </ligand>
</feature>
<feature type="binding site" evidence="1">
    <location>
        <begin position="145"/>
        <end position="148"/>
    </location>
    <ligand>
        <name>GTP</name>
        <dbReference type="ChEBI" id="CHEBI:37565"/>
    </ligand>
</feature>
<keyword id="KW-0963">Cytoplasm</keyword>
<keyword id="KW-0251">Elongation factor</keyword>
<keyword id="KW-0342">GTP-binding</keyword>
<keyword id="KW-0547">Nucleotide-binding</keyword>
<keyword id="KW-0648">Protein biosynthesis</keyword>
<keyword id="KW-1185">Reference proteome</keyword>
<evidence type="ECO:0000255" key="1">
    <source>
        <dbReference type="HAMAP-Rule" id="MF_00054"/>
    </source>
</evidence>
<gene>
    <name evidence="1" type="primary">fusA</name>
    <name type="ordered locus">LEUM_0189</name>
</gene>
<protein>
    <recommendedName>
        <fullName evidence="1">Elongation factor G</fullName>
        <shortName evidence="1">EF-G</shortName>
    </recommendedName>
</protein>
<accession>Q03ZQ2</accession>
<name>EFG_LEUMM</name>